<sequence>MKYIGAHVSAAGGLANAAIRAAEIDATAFALFTKNQRQWRAAPLTTQTIDEFKAACEKYHYTSAQILPHDSYLINLGHPVTEALEKSRDAFIDEMQRCEQLGLSLLNFHPGSHLMQISEEDCLARIAESINIALDKTQGVTAVIENTAGQGSNLGFKFEHLAAIIDGVEDKSRVGVCIDTCHAFAAGYDLRTPAECEKTFADFARTVGFKYLRGMHLNDAKSTFGSRVDRHHSLGEGNIGHDAFRWIMQDDRFDGIPLILETINPDIWAEEIAWLKAQQTEKAVA</sequence>
<proteinExistence type="inferred from homology"/>
<name>END4_ECODH</name>
<dbReference type="EC" id="3.1.21.2" evidence="1"/>
<dbReference type="EMBL" id="CP000948">
    <property type="protein sequence ID" value="ACB03323.1"/>
    <property type="molecule type" value="Genomic_DNA"/>
</dbReference>
<dbReference type="RefSeq" id="WP_000873894.1">
    <property type="nucleotide sequence ID" value="NC_010473.1"/>
</dbReference>
<dbReference type="SMR" id="B1X857"/>
<dbReference type="KEGG" id="ecd:ECDH10B_2316"/>
<dbReference type="HOGENOM" id="CLU_025885_0_4_6"/>
<dbReference type="GO" id="GO:0008833">
    <property type="term" value="F:deoxyribonuclease IV (phage-T4-induced) activity"/>
    <property type="evidence" value="ECO:0007669"/>
    <property type="project" value="UniProtKB-UniRule"/>
</dbReference>
<dbReference type="GO" id="GO:0003677">
    <property type="term" value="F:DNA binding"/>
    <property type="evidence" value="ECO:0007669"/>
    <property type="project" value="InterPro"/>
</dbReference>
<dbReference type="GO" id="GO:0003906">
    <property type="term" value="F:DNA-(apurinic or apyrimidinic site) endonuclease activity"/>
    <property type="evidence" value="ECO:0007669"/>
    <property type="project" value="TreeGrafter"/>
</dbReference>
<dbReference type="GO" id="GO:0008081">
    <property type="term" value="F:phosphoric diester hydrolase activity"/>
    <property type="evidence" value="ECO:0007669"/>
    <property type="project" value="TreeGrafter"/>
</dbReference>
<dbReference type="GO" id="GO:0008270">
    <property type="term" value="F:zinc ion binding"/>
    <property type="evidence" value="ECO:0007669"/>
    <property type="project" value="UniProtKB-UniRule"/>
</dbReference>
<dbReference type="GO" id="GO:0006284">
    <property type="term" value="P:base-excision repair"/>
    <property type="evidence" value="ECO:0007669"/>
    <property type="project" value="TreeGrafter"/>
</dbReference>
<dbReference type="CDD" id="cd00019">
    <property type="entry name" value="AP2Ec"/>
    <property type="match status" value="1"/>
</dbReference>
<dbReference type="FunFam" id="3.20.20.150:FF:000001">
    <property type="entry name" value="Probable endonuclease 4"/>
    <property type="match status" value="1"/>
</dbReference>
<dbReference type="Gene3D" id="3.20.20.150">
    <property type="entry name" value="Divalent-metal-dependent TIM barrel enzymes"/>
    <property type="match status" value="1"/>
</dbReference>
<dbReference type="HAMAP" id="MF_00152">
    <property type="entry name" value="Nfo"/>
    <property type="match status" value="1"/>
</dbReference>
<dbReference type="InterPro" id="IPR001719">
    <property type="entry name" value="AP_endonuc_2"/>
</dbReference>
<dbReference type="InterPro" id="IPR018246">
    <property type="entry name" value="AP_endonuc_F2_Zn_BS"/>
</dbReference>
<dbReference type="InterPro" id="IPR036237">
    <property type="entry name" value="Xyl_isomerase-like_sf"/>
</dbReference>
<dbReference type="InterPro" id="IPR013022">
    <property type="entry name" value="Xyl_isomerase-like_TIM-brl"/>
</dbReference>
<dbReference type="NCBIfam" id="TIGR00587">
    <property type="entry name" value="nfo"/>
    <property type="match status" value="1"/>
</dbReference>
<dbReference type="NCBIfam" id="NF002199">
    <property type="entry name" value="PRK01060.1-4"/>
    <property type="match status" value="1"/>
</dbReference>
<dbReference type="PANTHER" id="PTHR21445:SF0">
    <property type="entry name" value="APURINIC-APYRIMIDINIC ENDONUCLEASE"/>
    <property type="match status" value="1"/>
</dbReference>
<dbReference type="PANTHER" id="PTHR21445">
    <property type="entry name" value="ENDONUCLEASE IV ENDODEOXYRIBONUCLEASE IV"/>
    <property type="match status" value="1"/>
</dbReference>
<dbReference type="Pfam" id="PF01261">
    <property type="entry name" value="AP_endonuc_2"/>
    <property type="match status" value="1"/>
</dbReference>
<dbReference type="SMART" id="SM00518">
    <property type="entry name" value="AP2Ec"/>
    <property type="match status" value="1"/>
</dbReference>
<dbReference type="SUPFAM" id="SSF51658">
    <property type="entry name" value="Xylose isomerase-like"/>
    <property type="match status" value="1"/>
</dbReference>
<dbReference type="PROSITE" id="PS00729">
    <property type="entry name" value="AP_NUCLEASE_F2_1"/>
    <property type="match status" value="1"/>
</dbReference>
<dbReference type="PROSITE" id="PS00730">
    <property type="entry name" value="AP_NUCLEASE_F2_2"/>
    <property type="match status" value="1"/>
</dbReference>
<dbReference type="PROSITE" id="PS00731">
    <property type="entry name" value="AP_NUCLEASE_F2_3"/>
    <property type="match status" value="1"/>
</dbReference>
<dbReference type="PROSITE" id="PS51432">
    <property type="entry name" value="AP_NUCLEASE_F2_4"/>
    <property type="match status" value="1"/>
</dbReference>
<reference key="1">
    <citation type="journal article" date="2008" name="J. Bacteriol.">
        <title>The complete genome sequence of Escherichia coli DH10B: insights into the biology of a laboratory workhorse.</title>
        <authorList>
            <person name="Durfee T."/>
            <person name="Nelson R."/>
            <person name="Baldwin S."/>
            <person name="Plunkett G. III"/>
            <person name="Burland V."/>
            <person name="Mau B."/>
            <person name="Petrosino J.F."/>
            <person name="Qin X."/>
            <person name="Muzny D.M."/>
            <person name="Ayele M."/>
            <person name="Gibbs R.A."/>
            <person name="Csorgo B."/>
            <person name="Posfai G."/>
            <person name="Weinstock G.M."/>
            <person name="Blattner F.R."/>
        </authorList>
    </citation>
    <scope>NUCLEOTIDE SEQUENCE [LARGE SCALE GENOMIC DNA]</scope>
    <source>
        <strain>K12 / DH10B</strain>
    </source>
</reference>
<gene>
    <name evidence="1" type="primary">nfo</name>
    <name type="ordered locus">ECDH10B_2316</name>
</gene>
<evidence type="ECO:0000255" key="1">
    <source>
        <dbReference type="HAMAP-Rule" id="MF_00152"/>
    </source>
</evidence>
<organism>
    <name type="scientific">Escherichia coli (strain K12 / DH10B)</name>
    <dbReference type="NCBI Taxonomy" id="316385"/>
    <lineage>
        <taxon>Bacteria</taxon>
        <taxon>Pseudomonadati</taxon>
        <taxon>Pseudomonadota</taxon>
        <taxon>Gammaproteobacteria</taxon>
        <taxon>Enterobacterales</taxon>
        <taxon>Enterobacteriaceae</taxon>
        <taxon>Escherichia</taxon>
    </lineage>
</organism>
<keyword id="KW-0227">DNA damage</keyword>
<keyword id="KW-0234">DNA repair</keyword>
<keyword id="KW-0255">Endonuclease</keyword>
<keyword id="KW-0378">Hydrolase</keyword>
<keyword id="KW-0479">Metal-binding</keyword>
<keyword id="KW-0540">Nuclease</keyword>
<keyword id="KW-0862">Zinc</keyword>
<protein>
    <recommendedName>
        <fullName evidence="1">Probable endonuclease 4</fullName>
        <ecNumber evidence="1">3.1.21.2</ecNumber>
    </recommendedName>
    <alternativeName>
        <fullName evidence="1">Endodeoxyribonuclease IV</fullName>
    </alternativeName>
    <alternativeName>
        <fullName evidence="1">Endonuclease IV</fullName>
    </alternativeName>
</protein>
<feature type="chain" id="PRO_1000096880" description="Probable endonuclease 4">
    <location>
        <begin position="1"/>
        <end position="285"/>
    </location>
</feature>
<feature type="binding site" evidence="1">
    <location>
        <position position="69"/>
    </location>
    <ligand>
        <name>Zn(2+)</name>
        <dbReference type="ChEBI" id="CHEBI:29105"/>
        <label>1</label>
    </ligand>
</feature>
<feature type="binding site" evidence="1">
    <location>
        <position position="109"/>
    </location>
    <ligand>
        <name>Zn(2+)</name>
        <dbReference type="ChEBI" id="CHEBI:29105"/>
        <label>1</label>
    </ligand>
</feature>
<feature type="binding site" evidence="1">
    <location>
        <position position="145"/>
    </location>
    <ligand>
        <name>Zn(2+)</name>
        <dbReference type="ChEBI" id="CHEBI:29105"/>
        <label>1</label>
    </ligand>
</feature>
<feature type="binding site" evidence="1">
    <location>
        <position position="145"/>
    </location>
    <ligand>
        <name>Zn(2+)</name>
        <dbReference type="ChEBI" id="CHEBI:29105"/>
        <label>2</label>
    </ligand>
</feature>
<feature type="binding site" evidence="1">
    <location>
        <position position="179"/>
    </location>
    <ligand>
        <name>Zn(2+)</name>
        <dbReference type="ChEBI" id="CHEBI:29105"/>
        <label>2</label>
    </ligand>
</feature>
<feature type="binding site" evidence="1">
    <location>
        <position position="182"/>
    </location>
    <ligand>
        <name>Zn(2+)</name>
        <dbReference type="ChEBI" id="CHEBI:29105"/>
        <label>3</label>
    </ligand>
</feature>
<feature type="binding site" evidence="1">
    <location>
        <position position="216"/>
    </location>
    <ligand>
        <name>Zn(2+)</name>
        <dbReference type="ChEBI" id="CHEBI:29105"/>
        <label>2</label>
    </ligand>
</feature>
<feature type="binding site" evidence="1">
    <location>
        <position position="229"/>
    </location>
    <ligand>
        <name>Zn(2+)</name>
        <dbReference type="ChEBI" id="CHEBI:29105"/>
        <label>3</label>
    </ligand>
</feature>
<feature type="binding site" evidence="1">
    <location>
        <position position="231"/>
    </location>
    <ligand>
        <name>Zn(2+)</name>
        <dbReference type="ChEBI" id="CHEBI:29105"/>
        <label>3</label>
    </ligand>
</feature>
<feature type="binding site" evidence="1">
    <location>
        <position position="261"/>
    </location>
    <ligand>
        <name>Zn(2+)</name>
        <dbReference type="ChEBI" id="CHEBI:29105"/>
        <label>2</label>
    </ligand>
</feature>
<accession>B1X857</accession>
<comment type="function">
    <text evidence="1">Endonuclease IV plays a role in DNA repair. It cleaves phosphodiester bonds at apurinic or apyrimidinic (AP) sites, generating a 3'-hydroxyl group and a 5'-terminal sugar phosphate.</text>
</comment>
<comment type="catalytic activity">
    <reaction evidence="1">
        <text>Endonucleolytic cleavage to 5'-phosphooligonucleotide end-products.</text>
        <dbReference type="EC" id="3.1.21.2"/>
    </reaction>
</comment>
<comment type="cofactor">
    <cofactor evidence="1">
        <name>Zn(2+)</name>
        <dbReference type="ChEBI" id="CHEBI:29105"/>
    </cofactor>
    <text evidence="1">Binds 3 Zn(2+) ions.</text>
</comment>
<comment type="similarity">
    <text evidence="1">Belongs to the AP endonuclease 2 family.</text>
</comment>